<organism>
    <name type="scientific">Serratia proteamaculans (strain 568)</name>
    <dbReference type="NCBI Taxonomy" id="399741"/>
    <lineage>
        <taxon>Bacteria</taxon>
        <taxon>Pseudomonadati</taxon>
        <taxon>Pseudomonadota</taxon>
        <taxon>Gammaproteobacteria</taxon>
        <taxon>Enterobacterales</taxon>
        <taxon>Yersiniaceae</taxon>
        <taxon>Serratia</taxon>
    </lineage>
</organism>
<proteinExistence type="inferred from homology"/>
<accession>A8G8E3</accession>
<comment type="function">
    <text evidence="1">Forms part of the ribosomal stalk which helps the ribosome interact with GTP-bound translation factors.</text>
</comment>
<comment type="subunit">
    <text evidence="1">Part of the ribosomal stalk of the 50S ribosomal subunit. Interacts with L10 and the large rRNA to form the base of the stalk. L10 forms an elongated spine to which L12 dimers bind in a sequential fashion forming a multimeric L10(L12)X complex.</text>
</comment>
<comment type="PTM">
    <text evidence="1">One or more lysine residues are methylated.</text>
</comment>
<comment type="similarity">
    <text evidence="1">Belongs to the universal ribosomal protein uL11 family.</text>
</comment>
<gene>
    <name evidence="1" type="primary">rplK</name>
    <name type="ordered locus">Spro_0273</name>
</gene>
<evidence type="ECO:0000255" key="1">
    <source>
        <dbReference type="HAMAP-Rule" id="MF_00736"/>
    </source>
</evidence>
<evidence type="ECO:0000305" key="2"/>
<protein>
    <recommendedName>
        <fullName evidence="1">Large ribosomal subunit protein uL11</fullName>
    </recommendedName>
    <alternativeName>
        <fullName evidence="2">50S ribosomal protein L11</fullName>
    </alternativeName>
</protein>
<feature type="chain" id="PRO_1000062140" description="Large ribosomal subunit protein uL11">
    <location>
        <begin position="1"/>
        <end position="142"/>
    </location>
</feature>
<keyword id="KW-0488">Methylation</keyword>
<keyword id="KW-0687">Ribonucleoprotein</keyword>
<keyword id="KW-0689">Ribosomal protein</keyword>
<keyword id="KW-0694">RNA-binding</keyword>
<keyword id="KW-0699">rRNA-binding</keyword>
<reference key="1">
    <citation type="submission" date="2007-09" db="EMBL/GenBank/DDBJ databases">
        <title>Complete sequence of chromosome of Serratia proteamaculans 568.</title>
        <authorList>
            <consortium name="US DOE Joint Genome Institute"/>
            <person name="Copeland A."/>
            <person name="Lucas S."/>
            <person name="Lapidus A."/>
            <person name="Barry K."/>
            <person name="Glavina del Rio T."/>
            <person name="Dalin E."/>
            <person name="Tice H."/>
            <person name="Pitluck S."/>
            <person name="Chain P."/>
            <person name="Malfatti S."/>
            <person name="Shin M."/>
            <person name="Vergez L."/>
            <person name="Schmutz J."/>
            <person name="Larimer F."/>
            <person name="Land M."/>
            <person name="Hauser L."/>
            <person name="Kyrpides N."/>
            <person name="Kim E."/>
            <person name="Taghavi S."/>
            <person name="Newman L."/>
            <person name="Vangronsveld J."/>
            <person name="van der Lelie D."/>
            <person name="Richardson P."/>
        </authorList>
    </citation>
    <scope>NUCLEOTIDE SEQUENCE [LARGE SCALE GENOMIC DNA]</scope>
    <source>
        <strain>568</strain>
    </source>
</reference>
<dbReference type="EMBL" id="CP000826">
    <property type="protein sequence ID" value="ABV39383.1"/>
    <property type="molecule type" value="Genomic_DNA"/>
</dbReference>
<dbReference type="SMR" id="A8G8E3"/>
<dbReference type="STRING" id="399741.Spro_0273"/>
<dbReference type="KEGG" id="spe:Spro_0273"/>
<dbReference type="eggNOG" id="COG0080">
    <property type="taxonomic scope" value="Bacteria"/>
</dbReference>
<dbReference type="HOGENOM" id="CLU_074237_2_0_6"/>
<dbReference type="OrthoDB" id="9802408at2"/>
<dbReference type="GO" id="GO:0022625">
    <property type="term" value="C:cytosolic large ribosomal subunit"/>
    <property type="evidence" value="ECO:0007669"/>
    <property type="project" value="TreeGrafter"/>
</dbReference>
<dbReference type="GO" id="GO:0070180">
    <property type="term" value="F:large ribosomal subunit rRNA binding"/>
    <property type="evidence" value="ECO:0007669"/>
    <property type="project" value="UniProtKB-UniRule"/>
</dbReference>
<dbReference type="GO" id="GO:0003735">
    <property type="term" value="F:structural constituent of ribosome"/>
    <property type="evidence" value="ECO:0007669"/>
    <property type="project" value="InterPro"/>
</dbReference>
<dbReference type="GO" id="GO:0006412">
    <property type="term" value="P:translation"/>
    <property type="evidence" value="ECO:0007669"/>
    <property type="project" value="UniProtKB-UniRule"/>
</dbReference>
<dbReference type="CDD" id="cd00349">
    <property type="entry name" value="Ribosomal_L11"/>
    <property type="match status" value="1"/>
</dbReference>
<dbReference type="FunFam" id="1.10.10.250:FF:000001">
    <property type="entry name" value="50S ribosomal protein L11"/>
    <property type="match status" value="1"/>
</dbReference>
<dbReference type="FunFam" id="3.30.1550.10:FF:000001">
    <property type="entry name" value="50S ribosomal protein L11"/>
    <property type="match status" value="1"/>
</dbReference>
<dbReference type="Gene3D" id="1.10.10.250">
    <property type="entry name" value="Ribosomal protein L11, C-terminal domain"/>
    <property type="match status" value="1"/>
</dbReference>
<dbReference type="Gene3D" id="3.30.1550.10">
    <property type="entry name" value="Ribosomal protein L11/L12, N-terminal domain"/>
    <property type="match status" value="1"/>
</dbReference>
<dbReference type="HAMAP" id="MF_00736">
    <property type="entry name" value="Ribosomal_uL11"/>
    <property type="match status" value="1"/>
</dbReference>
<dbReference type="InterPro" id="IPR000911">
    <property type="entry name" value="Ribosomal_uL11"/>
</dbReference>
<dbReference type="InterPro" id="IPR006519">
    <property type="entry name" value="Ribosomal_uL11_bac-typ"/>
</dbReference>
<dbReference type="InterPro" id="IPR020783">
    <property type="entry name" value="Ribosomal_uL11_C"/>
</dbReference>
<dbReference type="InterPro" id="IPR036769">
    <property type="entry name" value="Ribosomal_uL11_C_sf"/>
</dbReference>
<dbReference type="InterPro" id="IPR020785">
    <property type="entry name" value="Ribosomal_uL11_CS"/>
</dbReference>
<dbReference type="InterPro" id="IPR020784">
    <property type="entry name" value="Ribosomal_uL11_N"/>
</dbReference>
<dbReference type="InterPro" id="IPR036796">
    <property type="entry name" value="Ribosomal_uL11_N_sf"/>
</dbReference>
<dbReference type="NCBIfam" id="TIGR01632">
    <property type="entry name" value="L11_bact"/>
    <property type="match status" value="1"/>
</dbReference>
<dbReference type="PANTHER" id="PTHR11661">
    <property type="entry name" value="60S RIBOSOMAL PROTEIN L12"/>
    <property type="match status" value="1"/>
</dbReference>
<dbReference type="PANTHER" id="PTHR11661:SF1">
    <property type="entry name" value="LARGE RIBOSOMAL SUBUNIT PROTEIN UL11M"/>
    <property type="match status" value="1"/>
</dbReference>
<dbReference type="Pfam" id="PF00298">
    <property type="entry name" value="Ribosomal_L11"/>
    <property type="match status" value="1"/>
</dbReference>
<dbReference type="Pfam" id="PF03946">
    <property type="entry name" value="Ribosomal_L11_N"/>
    <property type="match status" value="1"/>
</dbReference>
<dbReference type="SMART" id="SM00649">
    <property type="entry name" value="RL11"/>
    <property type="match status" value="1"/>
</dbReference>
<dbReference type="SUPFAM" id="SSF54747">
    <property type="entry name" value="Ribosomal L11/L12e N-terminal domain"/>
    <property type="match status" value="1"/>
</dbReference>
<dbReference type="SUPFAM" id="SSF46906">
    <property type="entry name" value="Ribosomal protein L11, C-terminal domain"/>
    <property type="match status" value="1"/>
</dbReference>
<dbReference type="PROSITE" id="PS00359">
    <property type="entry name" value="RIBOSOMAL_L11"/>
    <property type="match status" value="1"/>
</dbReference>
<name>RL11_SERP5</name>
<sequence length="142" mass="14824">MAKKVQAYVKLQVAAGMANPSPPVGPALGQQGVNIMEFCKAFNAKTDSVEKGLPIPVVITVYSDRSFTFVTKTPPAAVLLKKAAGIKSGSGKPNKDKVGKVTSAQVREIAETKAADMTGSNVEAMTRSIEGTARSMGLVVED</sequence>